<gene>
    <name evidence="1" type="primary">hisF</name>
    <name type="ordered locus">TK0248</name>
</gene>
<evidence type="ECO:0000255" key="1">
    <source>
        <dbReference type="HAMAP-Rule" id="MF_01013"/>
    </source>
</evidence>
<reference key="1">
    <citation type="journal article" date="2005" name="Genome Res.">
        <title>Complete genome sequence of the hyperthermophilic archaeon Thermococcus kodakaraensis KOD1 and comparison with Pyrococcus genomes.</title>
        <authorList>
            <person name="Fukui T."/>
            <person name="Atomi H."/>
            <person name="Kanai T."/>
            <person name="Matsumi R."/>
            <person name="Fujiwara S."/>
            <person name="Imanaka T."/>
        </authorList>
    </citation>
    <scope>NUCLEOTIDE SEQUENCE [LARGE SCALE GENOMIC DNA]</scope>
    <source>
        <strain>ATCC BAA-918 / JCM 12380 / KOD1</strain>
    </source>
</reference>
<accession>Q5JFU8</accession>
<organism>
    <name type="scientific">Thermococcus kodakarensis (strain ATCC BAA-918 / JCM 12380 / KOD1)</name>
    <name type="common">Pyrococcus kodakaraensis (strain KOD1)</name>
    <dbReference type="NCBI Taxonomy" id="69014"/>
    <lineage>
        <taxon>Archaea</taxon>
        <taxon>Methanobacteriati</taxon>
        <taxon>Methanobacteriota</taxon>
        <taxon>Thermococci</taxon>
        <taxon>Thermococcales</taxon>
        <taxon>Thermococcaceae</taxon>
        <taxon>Thermococcus</taxon>
    </lineage>
</organism>
<sequence>MLAKRIIAALDIRAGRVVKGIKFRNIRDAGDPVELARRYESEGIDEIVFLDITASHEKRGILLDLVERVAEEIYVPFTVGGGIKSAEEAGEIIKRGADKVFVNTAAVERPELVGEIAELVGSANLVVAIDAKWNGSFWEVYTHGGRKPRGIDAVEWARKVEELGAGEILLTSMDTDGTKEGFDIPLTRAVANAVDIPVIASGGAGRPEHFYEAFKAGAEAALAASIFHYGEYTVGQLKGFLAERGIPVRLDY</sequence>
<feature type="chain" id="PRO_0000142288" description="Imidazole glycerol phosphate synthase subunit HisF">
    <location>
        <begin position="1"/>
        <end position="252"/>
    </location>
</feature>
<feature type="active site" evidence="1">
    <location>
        <position position="11"/>
    </location>
</feature>
<feature type="active site" evidence="1">
    <location>
        <position position="130"/>
    </location>
</feature>
<keyword id="KW-0028">Amino-acid biosynthesis</keyword>
<keyword id="KW-0963">Cytoplasm</keyword>
<keyword id="KW-0368">Histidine biosynthesis</keyword>
<keyword id="KW-0456">Lyase</keyword>
<keyword id="KW-1185">Reference proteome</keyword>
<comment type="function">
    <text evidence="1">IGPS catalyzes the conversion of PRFAR and glutamine to IGP, AICAR and glutamate. The HisF subunit catalyzes the cyclization activity that produces IGP and AICAR from PRFAR using the ammonia provided by the HisH subunit.</text>
</comment>
<comment type="catalytic activity">
    <reaction evidence="1">
        <text>5-[(5-phospho-1-deoxy-D-ribulos-1-ylimino)methylamino]-1-(5-phospho-beta-D-ribosyl)imidazole-4-carboxamide + L-glutamine = D-erythro-1-(imidazol-4-yl)glycerol 3-phosphate + 5-amino-1-(5-phospho-beta-D-ribosyl)imidazole-4-carboxamide + L-glutamate + H(+)</text>
        <dbReference type="Rhea" id="RHEA:24793"/>
        <dbReference type="ChEBI" id="CHEBI:15378"/>
        <dbReference type="ChEBI" id="CHEBI:29985"/>
        <dbReference type="ChEBI" id="CHEBI:58278"/>
        <dbReference type="ChEBI" id="CHEBI:58359"/>
        <dbReference type="ChEBI" id="CHEBI:58475"/>
        <dbReference type="ChEBI" id="CHEBI:58525"/>
        <dbReference type="EC" id="4.3.2.10"/>
    </reaction>
</comment>
<comment type="pathway">
    <text evidence="1">Amino-acid biosynthesis; L-histidine biosynthesis; L-histidine from 5-phospho-alpha-D-ribose 1-diphosphate: step 5/9.</text>
</comment>
<comment type="subunit">
    <text evidence="1">Heterodimer of HisH and HisF.</text>
</comment>
<comment type="subcellular location">
    <subcellularLocation>
        <location evidence="1">Cytoplasm</location>
    </subcellularLocation>
</comment>
<comment type="similarity">
    <text evidence="1">Belongs to the HisA/HisF family.</text>
</comment>
<name>HIS6_THEKO</name>
<protein>
    <recommendedName>
        <fullName evidence="1">Imidazole glycerol phosphate synthase subunit HisF</fullName>
        <ecNumber evidence="1">4.3.2.10</ecNumber>
    </recommendedName>
    <alternativeName>
        <fullName evidence="1">IGP synthase cyclase subunit</fullName>
    </alternativeName>
    <alternativeName>
        <fullName evidence="1">IGP synthase subunit HisF</fullName>
    </alternativeName>
    <alternativeName>
        <fullName evidence="1">ImGP synthase subunit HisF</fullName>
        <shortName evidence="1">IGPS subunit HisF</shortName>
    </alternativeName>
</protein>
<proteinExistence type="inferred from homology"/>
<dbReference type="EC" id="4.3.2.10" evidence="1"/>
<dbReference type="EMBL" id="AP006878">
    <property type="protein sequence ID" value="BAD84437.1"/>
    <property type="molecule type" value="Genomic_DNA"/>
</dbReference>
<dbReference type="RefSeq" id="WP_011249203.1">
    <property type="nucleotide sequence ID" value="NC_006624.1"/>
</dbReference>
<dbReference type="SMR" id="Q5JFU8"/>
<dbReference type="FunCoup" id="Q5JFU8">
    <property type="interactions" value="178"/>
</dbReference>
<dbReference type="STRING" id="69014.TK0248"/>
<dbReference type="EnsemblBacteria" id="BAD84437">
    <property type="protein sequence ID" value="BAD84437"/>
    <property type="gene ID" value="TK0248"/>
</dbReference>
<dbReference type="GeneID" id="78446752"/>
<dbReference type="KEGG" id="tko:TK0248"/>
<dbReference type="PATRIC" id="fig|69014.16.peg.247"/>
<dbReference type="eggNOG" id="arCOG00617">
    <property type="taxonomic scope" value="Archaea"/>
</dbReference>
<dbReference type="HOGENOM" id="CLU_048577_4_0_2"/>
<dbReference type="InParanoid" id="Q5JFU8"/>
<dbReference type="OrthoDB" id="6261at2157"/>
<dbReference type="PhylomeDB" id="Q5JFU8"/>
<dbReference type="UniPathway" id="UPA00031">
    <property type="reaction ID" value="UER00010"/>
</dbReference>
<dbReference type="Proteomes" id="UP000000536">
    <property type="component" value="Chromosome"/>
</dbReference>
<dbReference type="GO" id="GO:0005737">
    <property type="term" value="C:cytoplasm"/>
    <property type="evidence" value="ECO:0007669"/>
    <property type="project" value="UniProtKB-SubCell"/>
</dbReference>
<dbReference type="GO" id="GO:0000107">
    <property type="term" value="F:imidazoleglycerol-phosphate synthase activity"/>
    <property type="evidence" value="ECO:0000318"/>
    <property type="project" value="GO_Central"/>
</dbReference>
<dbReference type="GO" id="GO:0016829">
    <property type="term" value="F:lyase activity"/>
    <property type="evidence" value="ECO:0007669"/>
    <property type="project" value="UniProtKB-KW"/>
</dbReference>
<dbReference type="GO" id="GO:0000105">
    <property type="term" value="P:L-histidine biosynthetic process"/>
    <property type="evidence" value="ECO:0007669"/>
    <property type="project" value="UniProtKB-UniRule"/>
</dbReference>
<dbReference type="CDD" id="cd04731">
    <property type="entry name" value="HisF"/>
    <property type="match status" value="1"/>
</dbReference>
<dbReference type="FunFam" id="3.20.20.70:FF:000006">
    <property type="entry name" value="Imidazole glycerol phosphate synthase subunit HisF"/>
    <property type="match status" value="1"/>
</dbReference>
<dbReference type="Gene3D" id="3.20.20.70">
    <property type="entry name" value="Aldolase class I"/>
    <property type="match status" value="1"/>
</dbReference>
<dbReference type="HAMAP" id="MF_01013">
    <property type="entry name" value="HisF"/>
    <property type="match status" value="1"/>
</dbReference>
<dbReference type="InterPro" id="IPR013785">
    <property type="entry name" value="Aldolase_TIM"/>
</dbReference>
<dbReference type="InterPro" id="IPR006062">
    <property type="entry name" value="His_biosynth"/>
</dbReference>
<dbReference type="InterPro" id="IPR004651">
    <property type="entry name" value="HisF"/>
</dbReference>
<dbReference type="InterPro" id="IPR050064">
    <property type="entry name" value="IGPS_HisA/HisF"/>
</dbReference>
<dbReference type="InterPro" id="IPR011060">
    <property type="entry name" value="RibuloseP-bd_barrel"/>
</dbReference>
<dbReference type="NCBIfam" id="TIGR00735">
    <property type="entry name" value="hisF"/>
    <property type="match status" value="1"/>
</dbReference>
<dbReference type="PANTHER" id="PTHR21235:SF2">
    <property type="entry name" value="IMIDAZOLE GLYCEROL PHOSPHATE SYNTHASE HISHF"/>
    <property type="match status" value="1"/>
</dbReference>
<dbReference type="PANTHER" id="PTHR21235">
    <property type="entry name" value="IMIDAZOLE GLYCEROL PHOSPHATE SYNTHASE SUBUNIT HISF/H IGP SYNTHASE SUBUNIT HISF/H"/>
    <property type="match status" value="1"/>
</dbReference>
<dbReference type="Pfam" id="PF00977">
    <property type="entry name" value="His_biosynth"/>
    <property type="match status" value="1"/>
</dbReference>
<dbReference type="SUPFAM" id="SSF51366">
    <property type="entry name" value="Ribulose-phoshate binding barrel"/>
    <property type="match status" value="1"/>
</dbReference>